<feature type="chain" id="PRO_0000169871" description="Sucrose-6-phosphate hydrolase">
    <location>
        <begin position="1"/>
        <end position="33" status="greater than"/>
    </location>
</feature>
<feature type="active site" evidence="2">
    <location>
        <position position="18"/>
    </location>
</feature>
<feature type="binding site" evidence="1">
    <location>
        <begin position="15"/>
        <end position="18"/>
    </location>
    <ligand>
        <name>substrate</name>
    </ligand>
</feature>
<feature type="non-terminal residue" evidence="4">
    <location>
        <position position="33"/>
    </location>
</feature>
<evidence type="ECO:0000250" key="1"/>
<evidence type="ECO:0000255" key="2">
    <source>
        <dbReference type="PROSITE-ProRule" id="PRU10067"/>
    </source>
</evidence>
<evidence type="ECO:0000269" key="3">
    <source>
    </source>
</evidence>
<evidence type="ECO:0000303" key="4">
    <source>
    </source>
</evidence>
<evidence type="ECO:0000305" key="5"/>
<name>SCRB_FUSMR</name>
<sequence length="33" mass="4143">MDKKEYINRLNEQKPLQEMXSRDRYLXNFHLIP</sequence>
<protein>
    <recommendedName>
        <fullName>Sucrose-6-phosphate hydrolase</fullName>
        <shortName>Sucrase</shortName>
        <ecNumber>3.2.1.26</ecNumber>
    </recommendedName>
    <alternativeName>
        <fullName>Invertase</fullName>
    </alternativeName>
</protein>
<proteinExistence type="evidence at protein level"/>
<keyword id="KW-0119">Carbohydrate metabolism</keyword>
<keyword id="KW-0903">Direct protein sequencing</keyword>
<keyword id="KW-0326">Glycosidase</keyword>
<keyword id="KW-0378">Hydrolase</keyword>
<comment type="catalytic activity">
    <reaction evidence="2 3">
        <text>Hydrolysis of terminal non-reducing beta-D-fructofuranoside residues in beta-D-fructofuranosides.</text>
        <dbReference type="EC" id="3.2.1.26"/>
    </reaction>
</comment>
<comment type="biophysicochemical properties">
    <kinetics>
        <KM evidence="3">40 mM for sucrose</KM>
        <KM evidence="3">0.28 mM for sucrose-6-phosphate</KM>
        <Vmax evidence="3">43.0 umol/min/mg enzyme for sucrose</Vmax>
        <Vmax evidence="3">270.0 umol/min/mg enzyme for sucrose 6-phosphate</Vmax>
    </kinetics>
    <phDependence>
        <text evidence="3">Optimum pH is 7.0.</text>
    </phDependence>
</comment>
<comment type="pathway">
    <text evidence="3">Glycan biosynthesis; sucrose metabolism.</text>
</comment>
<comment type="induction">
    <text evidence="3">Induced by sucrose.</text>
</comment>
<comment type="similarity">
    <text evidence="3">Belongs to the glycosyl hydrolase 32 family.</text>
</comment>
<accession>Q09122</accession>
<dbReference type="EC" id="3.2.1.26"/>
<dbReference type="SABIO-RK" id="Q09122"/>
<dbReference type="UniPathway" id="UPA00238"/>
<dbReference type="GO" id="GO:0004564">
    <property type="term" value="F:beta-fructofuranosidase activity"/>
    <property type="evidence" value="ECO:0000314"/>
    <property type="project" value="UniProtKB"/>
</dbReference>
<dbReference type="GO" id="GO:0016052">
    <property type="term" value="P:carbohydrate catabolic process"/>
    <property type="evidence" value="ECO:0000314"/>
    <property type="project" value="UniProtKB"/>
</dbReference>
<dbReference type="GO" id="GO:0005985">
    <property type="term" value="P:sucrose metabolic process"/>
    <property type="evidence" value="ECO:0007669"/>
    <property type="project" value="UniProtKB-UniPathway"/>
</dbReference>
<reference evidence="5" key="1">
    <citation type="journal article" date="1992" name="J. Bacteriol.">
        <title>Sucrose fermentation by Fusobacterium mortiferum ATCC 25557: transport, catabolism, and products.</title>
        <authorList>
            <person name="Thompson J."/>
            <person name="Nguyen N.Y."/>
            <person name="Robrish S.A."/>
        </authorList>
    </citation>
    <scope>PROTEIN SEQUENCE</scope>
    <scope>CATALYTIC ACTIVITY</scope>
    <scope>BIOPHYSICOCHEMICAL PROPERTIES</scope>
    <scope>PATHWAY</scope>
    <scope>INDUCTION</scope>
    <source>
        <strain>ATCC 25557 / DSM 19809 / CCUG 14475 / VPI 4123A</strain>
    </source>
</reference>
<organism>
    <name type="scientific">Fusobacterium mortiferum</name>
    <dbReference type="NCBI Taxonomy" id="850"/>
    <lineage>
        <taxon>Bacteria</taxon>
        <taxon>Fusobacteriati</taxon>
        <taxon>Fusobacteriota</taxon>
        <taxon>Fusobacteriia</taxon>
        <taxon>Fusobacteriales</taxon>
        <taxon>Fusobacteriaceae</taxon>
        <taxon>Fusobacterium</taxon>
    </lineage>
</organism>